<comment type="function">
    <text evidence="1">Involved in the third step of the chorismate pathway, which leads to the biosynthesis of aromatic amino acids. Catalyzes the cis-dehydration of 3-dehydroquinate (DHQ) and introduces the first double bond of the aromatic ring to yield 3-dehydroshikimate.</text>
</comment>
<comment type="catalytic activity">
    <reaction evidence="1">
        <text>3-dehydroquinate = 3-dehydroshikimate + H2O</text>
        <dbReference type="Rhea" id="RHEA:21096"/>
        <dbReference type="ChEBI" id="CHEBI:15377"/>
        <dbReference type="ChEBI" id="CHEBI:16630"/>
        <dbReference type="ChEBI" id="CHEBI:32364"/>
        <dbReference type="EC" id="4.2.1.10"/>
    </reaction>
</comment>
<comment type="pathway">
    <text evidence="1">Metabolic intermediate biosynthesis; chorismate biosynthesis; chorismate from D-erythrose 4-phosphate and phosphoenolpyruvate: step 3/7.</text>
</comment>
<comment type="subunit">
    <text evidence="1">Homodimer.</text>
</comment>
<comment type="similarity">
    <text evidence="1">Belongs to the type-I 3-dehydroquinase family.</text>
</comment>
<gene>
    <name evidence="1" type="primary">aroD</name>
    <name type="ordered locus">COXBURSA331_A0010</name>
</gene>
<proteinExistence type="inferred from homology"/>
<organism>
    <name type="scientific">Coxiella burnetii (strain RSA 331 / Henzerling II)</name>
    <dbReference type="NCBI Taxonomy" id="360115"/>
    <lineage>
        <taxon>Bacteria</taxon>
        <taxon>Pseudomonadati</taxon>
        <taxon>Pseudomonadota</taxon>
        <taxon>Gammaproteobacteria</taxon>
        <taxon>Legionellales</taxon>
        <taxon>Coxiellaceae</taxon>
        <taxon>Coxiella</taxon>
    </lineage>
</organism>
<protein>
    <recommendedName>
        <fullName evidence="1">3-dehydroquinate dehydratase</fullName>
        <shortName evidence="1">3-dehydroquinase</shortName>
        <ecNumber evidence="1">4.2.1.10</ecNumber>
    </recommendedName>
    <alternativeName>
        <fullName evidence="1">Type I DHQase</fullName>
    </alternativeName>
    <alternativeName>
        <fullName evidence="1">Type I dehydroquinase</fullName>
        <shortName evidence="1">DHQ1</shortName>
    </alternativeName>
</protein>
<sequence>MLNTPRICVVVIGKTLEEFLSQLEAAQTAVDFVELRIDYLEQINPNWVRIIKNHTHKKAILCCRARADGGKFLGTPEAQQEILQAGNDLGFDYLDIDLPVANKISIHEKKAKIIISYHNFLHTPPITELNFLLENMRLFNPDVFKFATKSEQYEDVKTLFKLLINKKNNENMIVLGMGEQGKIIRLLSPLLGGYLTFSSINGAISAPGQIDFKTMQDFYQRFYKISSPLKGED</sequence>
<reference key="1">
    <citation type="submission" date="2007-11" db="EMBL/GenBank/DDBJ databases">
        <title>Genome sequencing of phylogenetically and phenotypically diverse Coxiella burnetii isolates.</title>
        <authorList>
            <person name="Seshadri R."/>
            <person name="Samuel J.E."/>
        </authorList>
    </citation>
    <scope>NUCLEOTIDE SEQUENCE [LARGE SCALE GENOMIC DNA]</scope>
    <source>
        <strain>RSA 331 / Henzerling II</strain>
    </source>
</reference>
<dbReference type="EC" id="4.2.1.10" evidence="1"/>
<dbReference type="EMBL" id="CP000890">
    <property type="protein sequence ID" value="ABX79060.1"/>
    <property type="molecule type" value="Genomic_DNA"/>
</dbReference>
<dbReference type="RefSeq" id="WP_005772174.1">
    <property type="nucleotide sequence ID" value="NC_010117.1"/>
</dbReference>
<dbReference type="SMR" id="A9N909"/>
<dbReference type="KEGG" id="cbs:COXBURSA331_A0010"/>
<dbReference type="HOGENOM" id="CLU_064444_2_1_6"/>
<dbReference type="UniPathway" id="UPA00053">
    <property type="reaction ID" value="UER00086"/>
</dbReference>
<dbReference type="GO" id="GO:0003855">
    <property type="term" value="F:3-dehydroquinate dehydratase activity"/>
    <property type="evidence" value="ECO:0007669"/>
    <property type="project" value="UniProtKB-UniRule"/>
</dbReference>
<dbReference type="GO" id="GO:0046279">
    <property type="term" value="P:3,4-dihydroxybenzoate biosynthetic process"/>
    <property type="evidence" value="ECO:0007669"/>
    <property type="project" value="UniProtKB-ARBA"/>
</dbReference>
<dbReference type="GO" id="GO:0008652">
    <property type="term" value="P:amino acid biosynthetic process"/>
    <property type="evidence" value="ECO:0007669"/>
    <property type="project" value="UniProtKB-KW"/>
</dbReference>
<dbReference type="GO" id="GO:0009073">
    <property type="term" value="P:aromatic amino acid family biosynthetic process"/>
    <property type="evidence" value="ECO:0007669"/>
    <property type="project" value="UniProtKB-KW"/>
</dbReference>
<dbReference type="GO" id="GO:0009423">
    <property type="term" value="P:chorismate biosynthetic process"/>
    <property type="evidence" value="ECO:0007669"/>
    <property type="project" value="UniProtKB-UniRule"/>
</dbReference>
<dbReference type="CDD" id="cd00502">
    <property type="entry name" value="DHQase_I"/>
    <property type="match status" value="1"/>
</dbReference>
<dbReference type="FunFam" id="3.20.20.70:FF:000290">
    <property type="entry name" value="3-dehydroquinate dehydratase"/>
    <property type="match status" value="1"/>
</dbReference>
<dbReference type="Gene3D" id="3.20.20.70">
    <property type="entry name" value="Aldolase class I"/>
    <property type="match status" value="1"/>
</dbReference>
<dbReference type="HAMAP" id="MF_00214">
    <property type="entry name" value="AroD"/>
    <property type="match status" value="1"/>
</dbReference>
<dbReference type="InterPro" id="IPR013785">
    <property type="entry name" value="Aldolase_TIM"/>
</dbReference>
<dbReference type="InterPro" id="IPR001381">
    <property type="entry name" value="DHquinase_I"/>
</dbReference>
<dbReference type="InterPro" id="IPR050146">
    <property type="entry name" value="Type-I_3-dehydroquinase"/>
</dbReference>
<dbReference type="NCBIfam" id="TIGR01093">
    <property type="entry name" value="aroD"/>
    <property type="match status" value="1"/>
</dbReference>
<dbReference type="PANTHER" id="PTHR43699">
    <property type="entry name" value="3-DEHYDROQUINATE DEHYDRATASE"/>
    <property type="match status" value="1"/>
</dbReference>
<dbReference type="PANTHER" id="PTHR43699:SF1">
    <property type="entry name" value="3-DEHYDROQUINATE DEHYDRATASE"/>
    <property type="match status" value="1"/>
</dbReference>
<dbReference type="Pfam" id="PF01487">
    <property type="entry name" value="DHquinase_I"/>
    <property type="match status" value="1"/>
</dbReference>
<dbReference type="SUPFAM" id="SSF51569">
    <property type="entry name" value="Aldolase"/>
    <property type="match status" value="1"/>
</dbReference>
<accession>A9N909</accession>
<feature type="chain" id="PRO_1000078044" description="3-dehydroquinate dehydratase">
    <location>
        <begin position="1"/>
        <end position="233"/>
    </location>
</feature>
<feature type="active site" description="Proton donor/acceptor" evidence="1">
    <location>
        <position position="118"/>
    </location>
</feature>
<feature type="active site" description="Schiff-base intermediate with substrate" evidence="1">
    <location>
        <position position="145"/>
    </location>
</feature>
<feature type="binding site" evidence="1">
    <location>
        <begin position="34"/>
        <end position="36"/>
    </location>
    <ligand>
        <name>3-dehydroquinate</name>
        <dbReference type="ChEBI" id="CHEBI:32364"/>
    </ligand>
</feature>
<feature type="binding site" evidence="1">
    <location>
        <position position="64"/>
    </location>
    <ligand>
        <name>3-dehydroquinate</name>
        <dbReference type="ChEBI" id="CHEBI:32364"/>
    </ligand>
</feature>
<feature type="binding site" evidence="1">
    <location>
        <position position="185"/>
    </location>
    <ligand>
        <name>3-dehydroquinate</name>
        <dbReference type="ChEBI" id="CHEBI:32364"/>
    </ligand>
</feature>
<feature type="binding site" evidence="1">
    <location>
        <position position="205"/>
    </location>
    <ligand>
        <name>3-dehydroquinate</name>
        <dbReference type="ChEBI" id="CHEBI:32364"/>
    </ligand>
</feature>
<feature type="binding site" evidence="1">
    <location>
        <position position="209"/>
    </location>
    <ligand>
        <name>3-dehydroquinate</name>
        <dbReference type="ChEBI" id="CHEBI:32364"/>
    </ligand>
</feature>
<evidence type="ECO:0000255" key="1">
    <source>
        <dbReference type="HAMAP-Rule" id="MF_00214"/>
    </source>
</evidence>
<keyword id="KW-0028">Amino-acid biosynthesis</keyword>
<keyword id="KW-0057">Aromatic amino acid biosynthesis</keyword>
<keyword id="KW-0456">Lyase</keyword>
<keyword id="KW-0704">Schiff base</keyword>
<name>AROD_COXBR</name>